<feature type="peptide" id="PRO_0000294959" description="Kalata-B12" evidence="3">
    <location>
        <begin position="1"/>
        <end position="28"/>
    </location>
</feature>
<feature type="disulfide bond" evidence="1">
    <location>
        <begin position="4"/>
        <end position="18"/>
    </location>
</feature>
<feature type="disulfide bond" evidence="1">
    <location>
        <begin position="8"/>
        <end position="20"/>
    </location>
</feature>
<feature type="disulfide bond" evidence="1">
    <location>
        <begin position="13"/>
        <end position="25"/>
    </location>
</feature>
<feature type="cross-link" description="Cyclopeptide (Gly-Asp)" evidence="3">
    <location>
        <begin position="1"/>
        <end position="28"/>
    </location>
</feature>
<feature type="strand" evidence="5">
    <location>
        <begin position="2"/>
        <end position="7"/>
    </location>
</feature>
<feature type="turn" evidence="5">
    <location>
        <begin position="8"/>
        <end position="11"/>
    </location>
</feature>
<feature type="strand" evidence="5">
    <location>
        <begin position="24"/>
        <end position="27"/>
    </location>
</feature>
<keyword id="KW-0002">3D-structure</keyword>
<keyword id="KW-0903">Direct protein sequencing</keyword>
<keyword id="KW-1015">Disulfide bond</keyword>
<keyword id="KW-0960">Knottin</keyword>
<keyword id="KW-0611">Plant defense</keyword>
<name>KAB12_OLDAF</name>
<dbReference type="PDB" id="2KVX">
    <property type="method" value="NMR"/>
    <property type="chains" value="A=1-28"/>
</dbReference>
<dbReference type="PDBsum" id="2KVX"/>
<dbReference type="SMR" id="P85130"/>
<dbReference type="EvolutionaryTrace" id="P85130"/>
<dbReference type="GO" id="GO:0006952">
    <property type="term" value="P:defense response"/>
    <property type="evidence" value="ECO:0007669"/>
    <property type="project" value="UniProtKB-KW"/>
</dbReference>
<dbReference type="InterPro" id="IPR036146">
    <property type="entry name" value="Cyclotide_sf"/>
</dbReference>
<dbReference type="SUPFAM" id="SSF57038">
    <property type="entry name" value="Cyclotides"/>
    <property type="match status" value="1"/>
</dbReference>
<organism>
    <name type="scientific">Oldenlandia affinis</name>
    <dbReference type="NCBI Taxonomy" id="60225"/>
    <lineage>
        <taxon>Eukaryota</taxon>
        <taxon>Viridiplantae</taxon>
        <taxon>Streptophyta</taxon>
        <taxon>Embryophyta</taxon>
        <taxon>Tracheophyta</taxon>
        <taxon>Spermatophyta</taxon>
        <taxon>Magnoliopsida</taxon>
        <taxon>eudicotyledons</taxon>
        <taxon>Gunneridae</taxon>
        <taxon>Pentapetalae</taxon>
        <taxon>asterids</taxon>
        <taxon>lamiids</taxon>
        <taxon>Gentianales</taxon>
        <taxon>Rubiaceae</taxon>
        <taxon>Rubioideae</taxon>
        <taxon>Spermacoceae</taxon>
        <taxon>Hedyotis-Oldenlandia complex</taxon>
        <taxon>Oldenlandia</taxon>
    </lineage>
</organism>
<reference evidence="4" key="1">
    <citation type="journal article" date="2007" name="ChemBioChem">
        <title>The cyclotide fingerprint in Oldenlandia affinis: elucidation of chemically modified, linear and novel macrocyclic peptides.</title>
        <authorList>
            <person name="Plan M.R.R."/>
            <person name="Goeransson U."/>
            <person name="Clark R.J."/>
            <person name="Daly N.L."/>
            <person name="Colgrave M.L."/>
            <person name="Craik D.J."/>
        </authorList>
    </citation>
    <scope>PROTEIN SEQUENCE</scope>
    <scope>MASS SPECTROMETRY</scope>
</reference>
<accession>P85130</accession>
<evidence type="ECO:0000250" key="1">
    <source>
        <dbReference type="UniProtKB" id="P83836"/>
    </source>
</evidence>
<evidence type="ECO:0000255" key="2"/>
<evidence type="ECO:0000269" key="3">
    <source>
    </source>
</evidence>
<evidence type="ECO:0000305" key="4"/>
<evidence type="ECO:0007829" key="5">
    <source>
        <dbReference type="PDB" id="2KVX"/>
    </source>
</evidence>
<protein>
    <recommendedName>
        <fullName>Kalata-B12</fullName>
    </recommendedName>
</protein>
<sequence length="28" mass="2904">GSLCGDTCFVLGCNDSSCSCNYPICVKD</sequence>
<comment type="function">
    <text evidence="4">Probably participates in a plant defense mechanism.</text>
</comment>
<comment type="domain">
    <text evidence="1">The presence of a 'disulfide through disulfide knot' structurally defines this protein as a knottin.</text>
</comment>
<comment type="PTM">
    <text evidence="3">This is a cyclic peptide.</text>
</comment>
<comment type="mass spectrometry" mass="2880.3" method="Electrospray" evidence="3"/>
<comment type="similarity">
    <text evidence="2">Belongs to the cyclotide family. Moebius subfamily.</text>
</comment>
<comment type="caution">
    <text evidence="3">This peptide is cyclic. The start position was chosen by similarity to OAK1 (kalata-B1) for which the DNA sequence is known.</text>
</comment>
<proteinExistence type="evidence at protein level"/>